<proteinExistence type="inferred from homology"/>
<sequence>MSETFSPNLTFTEGFVLGQASFLIILLLFIRYVVFSPSEQIDHEGWRKRRAERADLLSNHTPPPLSNLLSKTSYDMSIHPAESSDWVNVLLAQILQGYRNDLLSEGGEEGARQRIEGWLNPKGENLSWLDPIDVTSLSLGTSYPLLSNARIRPADGQGRLRAEIDVDYLDSLSMTLSTAVLVNFPKPRFAVLPVTLGVELVSIGGTMSVQLHEPIEDRQHIHVNLLPDFHLNLKVTSLLGSRAKLQDIPKLEQLIVSRLRNLVQDRFVHPNHISLALPRILSPSVSSTPILEGLGEGAVDAMKDAVSDGMKRMVEDFMGENPVEGALNGQGEEQWLDDDFPPTPLVQPPGTFPTLSVSSRQSHRQSLPPSRPQSTTQGQPQLFYRRPLIHPTQSYPHYNTYTLDPQIPHSVSYRHPPRGSHVHNPPETPVPQRPSHGQGRMSTTSSLTPSQSQSQFRFRGQFASGVTPGQVGTSR</sequence>
<reference key="1">
    <citation type="journal article" date="2005" name="Science">
        <title>The genome of the basidiomycetous yeast and human pathogen Cryptococcus neoformans.</title>
        <authorList>
            <person name="Loftus B.J."/>
            <person name="Fung E."/>
            <person name="Roncaglia P."/>
            <person name="Rowley D."/>
            <person name="Amedeo P."/>
            <person name="Bruno D."/>
            <person name="Vamathevan J."/>
            <person name="Miranda M."/>
            <person name="Anderson I.J."/>
            <person name="Fraser J.A."/>
            <person name="Allen J.E."/>
            <person name="Bosdet I.E."/>
            <person name="Brent M.R."/>
            <person name="Chiu R."/>
            <person name="Doering T.L."/>
            <person name="Donlin M.J."/>
            <person name="D'Souza C.A."/>
            <person name="Fox D.S."/>
            <person name="Grinberg V."/>
            <person name="Fu J."/>
            <person name="Fukushima M."/>
            <person name="Haas B.J."/>
            <person name="Huang J.C."/>
            <person name="Janbon G."/>
            <person name="Jones S.J.M."/>
            <person name="Koo H.L."/>
            <person name="Krzywinski M.I."/>
            <person name="Kwon-Chung K.J."/>
            <person name="Lengeler K.B."/>
            <person name="Maiti R."/>
            <person name="Marra M.A."/>
            <person name="Marra R.E."/>
            <person name="Mathewson C.A."/>
            <person name="Mitchell T.G."/>
            <person name="Pertea M."/>
            <person name="Riggs F.R."/>
            <person name="Salzberg S.L."/>
            <person name="Schein J.E."/>
            <person name="Shvartsbeyn A."/>
            <person name="Shin H."/>
            <person name="Shumway M."/>
            <person name="Specht C.A."/>
            <person name="Suh B.B."/>
            <person name="Tenney A."/>
            <person name="Utterback T.R."/>
            <person name="Wickes B.L."/>
            <person name="Wortman J.R."/>
            <person name="Wye N.H."/>
            <person name="Kronstad J.W."/>
            <person name="Lodge J.K."/>
            <person name="Heitman J."/>
            <person name="Davis R.W."/>
            <person name="Fraser C.M."/>
            <person name="Hyman R.W."/>
        </authorList>
    </citation>
    <scope>NUCLEOTIDE SEQUENCE [LARGE SCALE GENOMIC DNA]</scope>
    <source>
        <strain>B-3501A</strain>
    </source>
</reference>
<gene>
    <name evidence="1" type="primary">MMM1</name>
    <name type="ordered locus">CNBL2050</name>
</gene>
<keyword id="KW-0256">Endoplasmic reticulum</keyword>
<keyword id="KW-0445">Lipid transport</keyword>
<keyword id="KW-0446">Lipid-binding</keyword>
<keyword id="KW-0472">Membrane</keyword>
<keyword id="KW-0812">Transmembrane</keyword>
<keyword id="KW-1133">Transmembrane helix</keyword>
<keyword id="KW-0813">Transport</keyword>
<dbReference type="EMBL" id="AAEY01000057">
    <property type="protein sequence ID" value="EAL17690.1"/>
    <property type="molecule type" value="Genomic_DNA"/>
</dbReference>
<dbReference type="RefSeq" id="XP_772337.1">
    <property type="nucleotide sequence ID" value="XM_767244.1"/>
</dbReference>
<dbReference type="SMR" id="P0CO81"/>
<dbReference type="EnsemblFungi" id="AAW45073">
    <property type="protein sequence ID" value="AAW45073"/>
    <property type="gene ID" value="CNH02060"/>
</dbReference>
<dbReference type="GeneID" id="4939254"/>
<dbReference type="KEGG" id="cnb:CNBL2050"/>
<dbReference type="VEuPathDB" id="FungiDB:CNBL2050"/>
<dbReference type="HOGENOM" id="CLU_628531_0_0_1"/>
<dbReference type="OrthoDB" id="3408at5206"/>
<dbReference type="GO" id="GO:0005789">
    <property type="term" value="C:endoplasmic reticulum membrane"/>
    <property type="evidence" value="ECO:0007669"/>
    <property type="project" value="UniProtKB-SubCell"/>
</dbReference>
<dbReference type="GO" id="GO:0032865">
    <property type="term" value="C:ERMES complex"/>
    <property type="evidence" value="ECO:0007669"/>
    <property type="project" value="UniProtKB-UniRule"/>
</dbReference>
<dbReference type="GO" id="GO:0008289">
    <property type="term" value="F:lipid binding"/>
    <property type="evidence" value="ECO:0007669"/>
    <property type="project" value="UniProtKB-KW"/>
</dbReference>
<dbReference type="GO" id="GO:0000002">
    <property type="term" value="P:mitochondrial genome maintenance"/>
    <property type="evidence" value="ECO:0007669"/>
    <property type="project" value="UniProtKB-UniRule"/>
</dbReference>
<dbReference type="GO" id="GO:1990456">
    <property type="term" value="P:mitochondrion-endoplasmic reticulum membrane tethering"/>
    <property type="evidence" value="ECO:0007669"/>
    <property type="project" value="TreeGrafter"/>
</dbReference>
<dbReference type="GO" id="GO:0015914">
    <property type="term" value="P:phospholipid transport"/>
    <property type="evidence" value="ECO:0007669"/>
    <property type="project" value="TreeGrafter"/>
</dbReference>
<dbReference type="GO" id="GO:0045040">
    <property type="term" value="P:protein insertion into mitochondrial outer membrane"/>
    <property type="evidence" value="ECO:0007669"/>
    <property type="project" value="UniProtKB-UniRule"/>
</dbReference>
<dbReference type="CDD" id="cd21671">
    <property type="entry name" value="SMP_Mmm1"/>
    <property type="match status" value="1"/>
</dbReference>
<dbReference type="HAMAP" id="MF_03103">
    <property type="entry name" value="Mmm1"/>
    <property type="match status" value="1"/>
</dbReference>
<dbReference type="InterPro" id="IPR027537">
    <property type="entry name" value="Mmm1"/>
</dbReference>
<dbReference type="InterPro" id="IPR019411">
    <property type="entry name" value="MMM1_dom"/>
</dbReference>
<dbReference type="InterPro" id="IPR031468">
    <property type="entry name" value="SMP_LBD"/>
</dbReference>
<dbReference type="PANTHER" id="PTHR13466:SF0">
    <property type="entry name" value="SMP-LTD DOMAIN-CONTAINING PROTEIN"/>
    <property type="match status" value="1"/>
</dbReference>
<dbReference type="PANTHER" id="PTHR13466">
    <property type="entry name" value="TEX2 PROTEIN-RELATED"/>
    <property type="match status" value="1"/>
</dbReference>
<dbReference type="Pfam" id="PF10296">
    <property type="entry name" value="MMM1"/>
    <property type="match status" value="2"/>
</dbReference>
<dbReference type="PROSITE" id="PS51847">
    <property type="entry name" value="SMP"/>
    <property type="match status" value="1"/>
</dbReference>
<protein>
    <recommendedName>
        <fullName evidence="1">Maintenance of mitochondrial morphology protein 1</fullName>
    </recommendedName>
</protein>
<accession>P0CO81</accession>
<accession>Q55IY0</accession>
<accession>Q5KCS3</accession>
<evidence type="ECO:0000255" key="1">
    <source>
        <dbReference type="HAMAP-Rule" id="MF_03103"/>
    </source>
</evidence>
<evidence type="ECO:0000256" key="2">
    <source>
        <dbReference type="SAM" id="MobiDB-lite"/>
    </source>
</evidence>
<name>MMM1_CRYNB</name>
<feature type="chain" id="PRO_0000410147" description="Maintenance of mitochondrial morphology protein 1">
    <location>
        <begin position="1"/>
        <end position="475"/>
    </location>
</feature>
<feature type="topological domain" description="Lumenal" evidence="1">
    <location>
        <begin position="1"/>
        <end position="14"/>
    </location>
</feature>
<feature type="transmembrane region" description="Helical" evidence="1">
    <location>
        <begin position="15"/>
        <end position="35"/>
    </location>
</feature>
<feature type="topological domain" description="Cytoplasmic" evidence="1">
    <location>
        <begin position="36"/>
        <end position="475"/>
    </location>
</feature>
<feature type="domain" description="SMP-LTD" evidence="1">
    <location>
        <begin position="80"/>
        <end position="278"/>
    </location>
</feature>
<feature type="region of interest" description="Disordered" evidence="2">
    <location>
        <begin position="321"/>
        <end position="381"/>
    </location>
</feature>
<feature type="region of interest" description="Disordered" evidence="2">
    <location>
        <begin position="394"/>
        <end position="475"/>
    </location>
</feature>
<feature type="compositionally biased region" description="Pro residues" evidence="2">
    <location>
        <begin position="341"/>
        <end position="351"/>
    </location>
</feature>
<feature type="compositionally biased region" description="Polar residues" evidence="2">
    <location>
        <begin position="353"/>
        <end position="380"/>
    </location>
</feature>
<feature type="compositionally biased region" description="Polar residues" evidence="2">
    <location>
        <begin position="394"/>
        <end position="403"/>
    </location>
</feature>
<feature type="compositionally biased region" description="Low complexity" evidence="2">
    <location>
        <begin position="442"/>
        <end position="464"/>
    </location>
</feature>
<organism>
    <name type="scientific">Cryptococcus neoformans var. neoformans serotype D (strain B-3501A)</name>
    <name type="common">Filobasidiella neoformans</name>
    <dbReference type="NCBI Taxonomy" id="283643"/>
    <lineage>
        <taxon>Eukaryota</taxon>
        <taxon>Fungi</taxon>
        <taxon>Dikarya</taxon>
        <taxon>Basidiomycota</taxon>
        <taxon>Agaricomycotina</taxon>
        <taxon>Tremellomycetes</taxon>
        <taxon>Tremellales</taxon>
        <taxon>Cryptococcaceae</taxon>
        <taxon>Cryptococcus</taxon>
        <taxon>Cryptococcus neoformans species complex</taxon>
    </lineage>
</organism>
<comment type="function">
    <text evidence="1">Component of the ERMES/MDM complex, which serves as a molecular tether to connect the endoplasmic reticulum (ER) and mitochondria. Components of this complex are involved in the control of mitochondrial shape and protein biogenesis, and function in nonvesicular lipid trafficking between the ER and mitochondria. The MDM12-MMM1 subcomplex functions in the major beta-barrel assembly pathway that is responsible for biogenesis of all outer membrane beta-barrel proteins, and acts in a late step after the SAM complex. The MDM10-MDM12-MMM1 subcomplex further acts in the TOM40-specific pathway after the action of the MDM12-MMM1 complex. Essential for establishing and maintaining the structure of mitochondria and maintenance of mtDNA nucleoids.</text>
</comment>
<comment type="subunit">
    <text evidence="1">Homodimer. Component of the ER-mitochondria encounter structure (ERMES) or MDM complex, composed of MMM1, MDM10, MDM12 and MDM34. A MMM1 homodimer associates with one molecule of MDM12 on each side in a pairwise head-to-tail manner, and the SMP-LTD domains of MMM1 and MDM12 generate a continuous hydrophobic tunnel for phospholipid trafficking.</text>
</comment>
<comment type="subcellular location">
    <subcellularLocation>
        <location evidence="1">Endoplasmic reticulum membrane</location>
        <topology evidence="1">Single-pass type I membrane protein</topology>
    </subcellularLocation>
    <text evidence="1">The ERMES/MDM complex localizes to a few discrete foci (around 10 per single cell), that represent mitochondria-endoplasmic reticulum junctions. These foci are often found next to mtDNA nucleoids.</text>
</comment>
<comment type="domain">
    <text evidence="1">The SMP-LTD domain is a barrel-like domain that can bind various types of glycerophospholipids in its interior and mediate their transfer between two adjacent bilayers.</text>
</comment>
<comment type="similarity">
    <text evidence="1">Belongs to the MMM1 family.</text>
</comment>